<comment type="function">
    <text evidence="1">ATP-dependent serine protease that mediates the selective degradation of mutant and abnormal proteins as well as certain short-lived regulatory proteins. Required for cellular homeostasis and for survival from DNA damage and developmental changes induced by stress. Degrades polypeptides processively to yield small peptide fragments that are 5 to 10 amino acids long. Binds to DNA in a double-stranded, site-specific manner (By similarity). In R.meliloti it is important for controlling the turnover of a constitutively expressed protein(s) that, when unregulated, disrupts normal nodule formation and normal growth.</text>
</comment>
<comment type="catalytic activity">
    <reaction evidence="1">
        <text>Hydrolysis of proteins in presence of ATP.</text>
        <dbReference type="EC" id="3.4.21.53"/>
    </reaction>
</comment>
<comment type="subunit">
    <text evidence="1">Homohexamer. Organized in a ring with a central cavity.</text>
</comment>
<comment type="subcellular location">
    <subcellularLocation>
        <location evidence="1">Cytoplasm</location>
    </subcellularLocation>
</comment>
<comment type="induction">
    <text evidence="1">By heat shock.</text>
</comment>
<comment type="similarity">
    <text evidence="1">Belongs to the peptidase S16 family.</text>
</comment>
<name>LON_RHIME</name>
<protein>
    <recommendedName>
        <fullName evidence="1">Lon protease</fullName>
        <ecNumber evidence="1">3.4.21.53</ecNumber>
    </recommendedName>
    <alternativeName>
        <fullName evidence="1">ATP-dependent protease La</fullName>
    </alternativeName>
</protein>
<feature type="chain" id="PRO_0000076144" description="Lon protease">
    <location>
        <begin position="1"/>
        <end position="806"/>
    </location>
</feature>
<feature type="domain" description="Lon N-terminal" evidence="3">
    <location>
        <begin position="14"/>
        <end position="207"/>
    </location>
</feature>
<feature type="domain" description="Lon proteolytic" evidence="2">
    <location>
        <begin position="594"/>
        <end position="775"/>
    </location>
</feature>
<feature type="region of interest" description="Disordered" evidence="4">
    <location>
        <begin position="786"/>
        <end position="806"/>
    </location>
</feature>
<feature type="active site" evidence="1">
    <location>
        <position position="681"/>
    </location>
</feature>
<feature type="active site" evidence="1">
    <location>
        <position position="724"/>
    </location>
</feature>
<feature type="binding site" evidence="1">
    <location>
        <begin position="359"/>
        <end position="366"/>
    </location>
    <ligand>
        <name>ATP</name>
        <dbReference type="ChEBI" id="CHEBI:30616"/>
    </ligand>
</feature>
<feature type="sequence conflict" description="In Ref. 4." evidence="5" ref="4">
    <original>IERYTPRDDFYEAMAHALPEPDED</original>
    <variation>TNAIRRVTIFTRPWPMHCPNRTRY</variation>
    <location>
        <begin position="103"/>
        <end position="126"/>
    </location>
</feature>
<feature type="sequence conflict" description="In Ref. 1; AAF05300." evidence="5" ref="1">
    <original>L</original>
    <variation>F</variation>
    <location>
        <position position="266"/>
    </location>
</feature>
<feature type="sequence conflict" description="In Ref. 4; AAC17128." evidence="5" ref="4">
    <original>PILCLVG</original>
    <variation>RSLLVVS</variation>
    <location>
        <begin position="353"/>
        <end position="359"/>
    </location>
</feature>
<feature type="sequence conflict" description="In Ref. 1; AAF05300." evidence="5" ref="1">
    <original>L</original>
    <variation>F</variation>
    <location>
        <position position="357"/>
    </location>
</feature>
<feature type="sequence conflict" description="In Ref. 1; AAF05300." evidence="5" ref="1">
    <original>I</original>
    <variation>F</variation>
    <location>
        <position position="491"/>
    </location>
</feature>
<feature type="sequence conflict" description="In Ref. 1; AAF05300." evidence="5" ref="1">
    <original>D</original>
    <variation>E</variation>
    <location>
        <position position="499"/>
    </location>
</feature>
<feature type="sequence conflict" description="In Ref. 1; AAF05300." evidence="5" ref="1">
    <original>R</original>
    <variation>L</variation>
    <location>
        <position position="502"/>
    </location>
</feature>
<feature type="sequence conflict" description="In Ref. 1; AAF05300." evidence="5" ref="1">
    <original>P</original>
    <variation>T</variation>
    <location>
        <position position="521"/>
    </location>
</feature>
<feature type="sequence conflict" description="In Ref. 1; AAF05300." evidence="5" ref="1">
    <original>MAV</original>
    <variation>TAI</variation>
    <location>
        <begin position="532"/>
        <end position="534"/>
    </location>
</feature>
<feature type="sequence conflict" description="In Ref. 1; AAF05300." evidence="5" ref="1">
    <original>T</original>
    <variation>S</variation>
    <location>
        <position position="573"/>
    </location>
</feature>
<feature type="sequence conflict" description="In Ref. 1; AAF05300." evidence="5" ref="1">
    <original>H</original>
    <variation>N</variation>
    <location>
        <position position="578"/>
    </location>
</feature>
<feature type="sequence conflict" description="In Ref. 1; AAF05300." evidence="5" ref="1">
    <original>L</original>
    <variation>I</variation>
    <location>
        <position position="746"/>
    </location>
</feature>
<feature type="sequence conflict" description="In Ref. 1; AAF05300." evidence="5" ref="1">
    <original>L</original>
    <variation>F</variation>
    <location>
        <position position="757"/>
    </location>
</feature>
<proteinExistence type="inferred from homology"/>
<organism>
    <name type="scientific">Rhizobium meliloti (strain 1021)</name>
    <name type="common">Ensifer meliloti</name>
    <name type="synonym">Sinorhizobium meliloti</name>
    <dbReference type="NCBI Taxonomy" id="266834"/>
    <lineage>
        <taxon>Bacteria</taxon>
        <taxon>Pseudomonadati</taxon>
        <taxon>Pseudomonadota</taxon>
        <taxon>Alphaproteobacteria</taxon>
        <taxon>Hyphomicrobiales</taxon>
        <taxon>Rhizobiaceae</taxon>
        <taxon>Sinorhizobium/Ensifer group</taxon>
        <taxon>Sinorhizobium</taxon>
    </lineage>
</organism>
<evidence type="ECO:0000255" key="1">
    <source>
        <dbReference type="HAMAP-Rule" id="MF_01973"/>
    </source>
</evidence>
<evidence type="ECO:0000255" key="2">
    <source>
        <dbReference type="PROSITE-ProRule" id="PRU01122"/>
    </source>
</evidence>
<evidence type="ECO:0000255" key="3">
    <source>
        <dbReference type="PROSITE-ProRule" id="PRU01123"/>
    </source>
</evidence>
<evidence type="ECO:0000256" key="4">
    <source>
        <dbReference type="SAM" id="MobiDB-lite"/>
    </source>
</evidence>
<evidence type="ECO:0000305" key="5"/>
<reference key="1">
    <citation type="journal article" date="2000" name="J. Bacteriol.">
        <title>The Sinorhizobium meliloti lon protease is involved in regulating exopolysaccharide synthesis and is required for nodulation of alfalfa.</title>
        <authorList>
            <person name="Summers M.L."/>
            <person name="Botero L.M."/>
            <person name="Busse S.C."/>
            <person name="McDermott T.R."/>
        </authorList>
    </citation>
    <scope>NUCLEOTIDE SEQUENCE [GENOMIC DNA]</scope>
</reference>
<reference key="2">
    <citation type="journal article" date="2001" name="Proc. Natl. Acad. Sci. U.S.A.">
        <title>Analysis of the chromosome sequence of the legume symbiont Sinorhizobium meliloti strain 1021.</title>
        <authorList>
            <person name="Capela D."/>
            <person name="Barloy-Hubler F."/>
            <person name="Gouzy J."/>
            <person name="Bothe G."/>
            <person name="Ampe F."/>
            <person name="Batut J."/>
            <person name="Boistard P."/>
            <person name="Becker A."/>
            <person name="Boutry M."/>
            <person name="Cadieu E."/>
            <person name="Dreano S."/>
            <person name="Gloux S."/>
            <person name="Godrie T."/>
            <person name="Goffeau A."/>
            <person name="Kahn D."/>
            <person name="Kiss E."/>
            <person name="Lelaure V."/>
            <person name="Masuy D."/>
            <person name="Pohl T."/>
            <person name="Portetelle D."/>
            <person name="Puehler A."/>
            <person name="Purnelle B."/>
            <person name="Ramsperger U."/>
            <person name="Renard C."/>
            <person name="Thebault P."/>
            <person name="Vandenbol M."/>
            <person name="Weidner S."/>
            <person name="Galibert F."/>
        </authorList>
    </citation>
    <scope>NUCLEOTIDE SEQUENCE [LARGE SCALE GENOMIC DNA]</scope>
    <source>
        <strain>1021</strain>
    </source>
</reference>
<reference key="3">
    <citation type="journal article" date="2001" name="Science">
        <title>The composite genome of the legume symbiont Sinorhizobium meliloti.</title>
        <authorList>
            <person name="Galibert F."/>
            <person name="Finan T.M."/>
            <person name="Long S.R."/>
            <person name="Puehler A."/>
            <person name="Abola P."/>
            <person name="Ampe F."/>
            <person name="Barloy-Hubler F."/>
            <person name="Barnett M.J."/>
            <person name="Becker A."/>
            <person name="Boistard P."/>
            <person name="Bothe G."/>
            <person name="Boutry M."/>
            <person name="Bowser L."/>
            <person name="Buhrmester J."/>
            <person name="Cadieu E."/>
            <person name="Capela D."/>
            <person name="Chain P."/>
            <person name="Cowie A."/>
            <person name="Davis R.W."/>
            <person name="Dreano S."/>
            <person name="Federspiel N.A."/>
            <person name="Fisher R.F."/>
            <person name="Gloux S."/>
            <person name="Godrie T."/>
            <person name="Goffeau A."/>
            <person name="Golding B."/>
            <person name="Gouzy J."/>
            <person name="Gurjal M."/>
            <person name="Hernandez-Lucas I."/>
            <person name="Hong A."/>
            <person name="Huizar L."/>
            <person name="Hyman R.W."/>
            <person name="Jones T."/>
            <person name="Kahn D."/>
            <person name="Kahn M.L."/>
            <person name="Kalman S."/>
            <person name="Keating D.H."/>
            <person name="Kiss E."/>
            <person name="Komp C."/>
            <person name="Lelaure V."/>
            <person name="Masuy D."/>
            <person name="Palm C."/>
            <person name="Peck M.C."/>
            <person name="Pohl T.M."/>
            <person name="Portetelle D."/>
            <person name="Purnelle B."/>
            <person name="Ramsperger U."/>
            <person name="Surzycki R."/>
            <person name="Thebault P."/>
            <person name="Vandenbol M."/>
            <person name="Vorhoelter F.J."/>
            <person name="Weidner S."/>
            <person name="Wells D.H."/>
            <person name="Wong K."/>
            <person name="Yeh K.-C."/>
            <person name="Batut J."/>
        </authorList>
    </citation>
    <scope>NUCLEOTIDE SEQUENCE [LARGE SCALE GENOMIC DNA]</scope>
    <source>
        <strain>1021</strain>
    </source>
</reference>
<reference key="4">
    <citation type="submission" date="1998-05" db="EMBL/GenBank/DDBJ databases">
        <title>Partial coding sequence of Sinorhizobium meliloti lon gene.</title>
        <authorList>
            <person name="Biondi E."/>
            <person name="Fancelli S."/>
            <person name="Bazzicalupo M."/>
        </authorList>
    </citation>
    <scope>NUCLEOTIDE SEQUENCE [GENOMIC DNA] OF 103-359</scope>
    <source>
        <strain>CL375B</strain>
    </source>
</reference>
<accession>O69177</accession>
<sequence length="806" mass="89458">MTNKTSPATESATYPVLPLRDIVVFPHMIVPLFVGREKSIRALEEVMGTDKQIMLVTQINATDDDPEPSAIYKVGTIANVLQLLKLPDGTVKVLVEGRSRAEIERYTPRDDFYEAMAHALPEPDEDPVEIEALSRSVVSEFESYVKLNKKISPEVVGVASQIEDYSKLADTVASHLSIKIVEKQEMLETTSVKMRLEKALGFMEGEISVLQVEKRIRSRVKRQMEKTQREYYLNEQMKAIQKELGDSEDGRDEMAELEERISKTKLSKEAREKADAELKKLRQMSPMSAEATVVRNYLDWLLGLPWGKKSKIKTDLNHAEKVLDTDHFGLDKVKERIVEYLAVQARSSKIKGPILCLVGPPGVGKTSLAKSIAKATGREYIRMALGGVRDEAEIRGHRRTYIGSMPGKVVQSMKKAKKSNPLFLLDEIDKMGQDFRGDPSSALLEVLDPEQNSTFMDHYLEVEYDLSNVMFITTANTLNIPPPLMDRMEVIRIAGYTEDEKREIAKRHLLPKAIRDHALQPNEFSVTDGALMAVIQNYTREAGVRNFERELMKLARKAVTEILKGKTKKVEVTAENIHDYLGVPRFRHGEAERDDQVGVVTGLAWTEVGGELLTIEGVMMPGKGRMTVTGNLRDVMKESISAAASYVRSRAIDFGIEPPLFDKRDIHVHVPEGATPKDGPSAGVAMATAIVSVMTGIPISKDVAMTGEITLRGRVLPIGGLKEKLLAALRGGIKKVLIPEENAKDLADIPDNVKNSLEIIPVSRMGEVIAHALLRLPEPIEWDPASQPAALPSVDSQDEAGTSIAH</sequence>
<gene>
    <name evidence="1" type="primary">lon</name>
    <name type="ordered locus">R01257</name>
    <name type="ORF">SMc01905</name>
</gene>
<keyword id="KW-0067">ATP-binding</keyword>
<keyword id="KW-0963">Cytoplasm</keyword>
<keyword id="KW-0378">Hydrolase</keyword>
<keyword id="KW-0547">Nucleotide-binding</keyword>
<keyword id="KW-0645">Protease</keyword>
<keyword id="KW-1185">Reference proteome</keyword>
<keyword id="KW-0720">Serine protease</keyword>
<keyword id="KW-0346">Stress response</keyword>
<dbReference type="EC" id="3.4.21.53" evidence="1"/>
<dbReference type="EMBL" id="AF167159">
    <property type="protein sequence ID" value="AAF05300.1"/>
    <property type="molecule type" value="Genomic_DNA"/>
</dbReference>
<dbReference type="EMBL" id="AL591688">
    <property type="protein sequence ID" value="CAC45836.1"/>
    <property type="molecule type" value="Genomic_DNA"/>
</dbReference>
<dbReference type="EMBL" id="AF065445">
    <property type="protein sequence ID" value="AAC17128.1"/>
    <property type="molecule type" value="Genomic_DNA"/>
</dbReference>
<dbReference type="RefSeq" id="NP_385363.1">
    <property type="nucleotide sequence ID" value="NC_003047.1"/>
</dbReference>
<dbReference type="RefSeq" id="WP_003531808.1">
    <property type="nucleotide sequence ID" value="NC_003047.1"/>
</dbReference>
<dbReference type="SMR" id="O69177"/>
<dbReference type="MEROPS" id="S16.001"/>
<dbReference type="EnsemblBacteria" id="CAC45836">
    <property type="protein sequence ID" value="CAC45836"/>
    <property type="gene ID" value="SMc01905"/>
</dbReference>
<dbReference type="GeneID" id="89575577"/>
<dbReference type="KEGG" id="sme:SMc01905"/>
<dbReference type="PATRIC" id="fig|266834.11.peg.2671"/>
<dbReference type="eggNOG" id="COG0466">
    <property type="taxonomic scope" value="Bacteria"/>
</dbReference>
<dbReference type="HOGENOM" id="CLU_004109_4_3_5"/>
<dbReference type="OrthoDB" id="9803599at2"/>
<dbReference type="Proteomes" id="UP000001976">
    <property type="component" value="Chromosome"/>
</dbReference>
<dbReference type="GO" id="GO:0005737">
    <property type="term" value="C:cytoplasm"/>
    <property type="evidence" value="ECO:0007669"/>
    <property type="project" value="UniProtKB-SubCell"/>
</dbReference>
<dbReference type="GO" id="GO:0005524">
    <property type="term" value="F:ATP binding"/>
    <property type="evidence" value="ECO:0007669"/>
    <property type="project" value="UniProtKB-UniRule"/>
</dbReference>
<dbReference type="GO" id="GO:0016887">
    <property type="term" value="F:ATP hydrolysis activity"/>
    <property type="evidence" value="ECO:0007669"/>
    <property type="project" value="UniProtKB-UniRule"/>
</dbReference>
<dbReference type="GO" id="GO:0004176">
    <property type="term" value="F:ATP-dependent peptidase activity"/>
    <property type="evidence" value="ECO:0007669"/>
    <property type="project" value="UniProtKB-UniRule"/>
</dbReference>
<dbReference type="GO" id="GO:0043565">
    <property type="term" value="F:sequence-specific DNA binding"/>
    <property type="evidence" value="ECO:0007669"/>
    <property type="project" value="UniProtKB-UniRule"/>
</dbReference>
<dbReference type="GO" id="GO:0004252">
    <property type="term" value="F:serine-type endopeptidase activity"/>
    <property type="evidence" value="ECO:0007669"/>
    <property type="project" value="UniProtKB-UniRule"/>
</dbReference>
<dbReference type="GO" id="GO:0034605">
    <property type="term" value="P:cellular response to heat"/>
    <property type="evidence" value="ECO:0007669"/>
    <property type="project" value="UniProtKB-UniRule"/>
</dbReference>
<dbReference type="GO" id="GO:0006515">
    <property type="term" value="P:protein quality control for misfolded or incompletely synthesized proteins"/>
    <property type="evidence" value="ECO:0007669"/>
    <property type="project" value="UniProtKB-UniRule"/>
</dbReference>
<dbReference type="CDD" id="cd19500">
    <property type="entry name" value="RecA-like_Lon"/>
    <property type="match status" value="1"/>
</dbReference>
<dbReference type="FunFam" id="3.30.230.10:FF:000010">
    <property type="entry name" value="Lon protease"/>
    <property type="match status" value="1"/>
</dbReference>
<dbReference type="FunFam" id="1.20.5.5270:FF:000002">
    <property type="entry name" value="Lon protease homolog"/>
    <property type="match status" value="1"/>
</dbReference>
<dbReference type="FunFam" id="3.40.50.300:FF:000021">
    <property type="entry name" value="Lon protease homolog"/>
    <property type="match status" value="1"/>
</dbReference>
<dbReference type="Gene3D" id="1.10.8.60">
    <property type="match status" value="1"/>
</dbReference>
<dbReference type="Gene3D" id="1.20.5.5270">
    <property type="match status" value="1"/>
</dbReference>
<dbReference type="Gene3D" id="1.20.58.1480">
    <property type="match status" value="1"/>
</dbReference>
<dbReference type="Gene3D" id="3.30.230.10">
    <property type="match status" value="1"/>
</dbReference>
<dbReference type="Gene3D" id="2.30.130.40">
    <property type="entry name" value="LON domain-like"/>
    <property type="match status" value="1"/>
</dbReference>
<dbReference type="Gene3D" id="3.40.50.300">
    <property type="entry name" value="P-loop containing nucleotide triphosphate hydrolases"/>
    <property type="match status" value="1"/>
</dbReference>
<dbReference type="HAMAP" id="MF_01973">
    <property type="entry name" value="lon_bact"/>
    <property type="match status" value="1"/>
</dbReference>
<dbReference type="InterPro" id="IPR003593">
    <property type="entry name" value="AAA+_ATPase"/>
</dbReference>
<dbReference type="InterPro" id="IPR003959">
    <property type="entry name" value="ATPase_AAA_core"/>
</dbReference>
<dbReference type="InterPro" id="IPR027543">
    <property type="entry name" value="Lon_bac"/>
</dbReference>
<dbReference type="InterPro" id="IPR004815">
    <property type="entry name" value="Lon_bac/euk-typ"/>
</dbReference>
<dbReference type="InterPro" id="IPR054594">
    <property type="entry name" value="Lon_lid"/>
</dbReference>
<dbReference type="InterPro" id="IPR008269">
    <property type="entry name" value="Lon_proteolytic"/>
</dbReference>
<dbReference type="InterPro" id="IPR027065">
    <property type="entry name" value="Lon_Prtase"/>
</dbReference>
<dbReference type="InterPro" id="IPR003111">
    <property type="entry name" value="Lon_prtase_N"/>
</dbReference>
<dbReference type="InterPro" id="IPR046336">
    <property type="entry name" value="Lon_prtase_N_sf"/>
</dbReference>
<dbReference type="InterPro" id="IPR027417">
    <property type="entry name" value="P-loop_NTPase"/>
</dbReference>
<dbReference type="InterPro" id="IPR008268">
    <property type="entry name" value="Peptidase_S16_AS"/>
</dbReference>
<dbReference type="InterPro" id="IPR015947">
    <property type="entry name" value="PUA-like_sf"/>
</dbReference>
<dbReference type="InterPro" id="IPR020568">
    <property type="entry name" value="Ribosomal_Su5_D2-typ_SF"/>
</dbReference>
<dbReference type="InterPro" id="IPR014721">
    <property type="entry name" value="Ribsml_uS5_D2-typ_fold_subgr"/>
</dbReference>
<dbReference type="NCBIfam" id="TIGR00763">
    <property type="entry name" value="lon"/>
    <property type="match status" value="1"/>
</dbReference>
<dbReference type="NCBIfam" id="NF008053">
    <property type="entry name" value="PRK10787.1"/>
    <property type="match status" value="1"/>
</dbReference>
<dbReference type="PANTHER" id="PTHR10046">
    <property type="entry name" value="ATP DEPENDENT LON PROTEASE FAMILY MEMBER"/>
    <property type="match status" value="1"/>
</dbReference>
<dbReference type="Pfam" id="PF00004">
    <property type="entry name" value="AAA"/>
    <property type="match status" value="1"/>
</dbReference>
<dbReference type="Pfam" id="PF05362">
    <property type="entry name" value="Lon_C"/>
    <property type="match status" value="1"/>
</dbReference>
<dbReference type="Pfam" id="PF22667">
    <property type="entry name" value="Lon_lid"/>
    <property type="match status" value="1"/>
</dbReference>
<dbReference type="Pfam" id="PF02190">
    <property type="entry name" value="LON_substr_bdg"/>
    <property type="match status" value="1"/>
</dbReference>
<dbReference type="PIRSF" id="PIRSF001174">
    <property type="entry name" value="Lon_proteas"/>
    <property type="match status" value="1"/>
</dbReference>
<dbReference type="PRINTS" id="PR00830">
    <property type="entry name" value="ENDOLAPTASE"/>
</dbReference>
<dbReference type="SMART" id="SM00382">
    <property type="entry name" value="AAA"/>
    <property type="match status" value="1"/>
</dbReference>
<dbReference type="SMART" id="SM00464">
    <property type="entry name" value="LON"/>
    <property type="match status" value="1"/>
</dbReference>
<dbReference type="SUPFAM" id="SSF52540">
    <property type="entry name" value="P-loop containing nucleoside triphosphate hydrolases"/>
    <property type="match status" value="1"/>
</dbReference>
<dbReference type="SUPFAM" id="SSF88697">
    <property type="entry name" value="PUA domain-like"/>
    <property type="match status" value="1"/>
</dbReference>
<dbReference type="SUPFAM" id="SSF54211">
    <property type="entry name" value="Ribosomal protein S5 domain 2-like"/>
    <property type="match status" value="1"/>
</dbReference>
<dbReference type="PROSITE" id="PS51787">
    <property type="entry name" value="LON_N"/>
    <property type="match status" value="1"/>
</dbReference>
<dbReference type="PROSITE" id="PS51786">
    <property type="entry name" value="LON_PROTEOLYTIC"/>
    <property type="match status" value="1"/>
</dbReference>
<dbReference type="PROSITE" id="PS01046">
    <property type="entry name" value="LON_SER"/>
    <property type="match status" value="1"/>
</dbReference>